<evidence type="ECO:0000250" key="1">
    <source>
        <dbReference type="UniProtKB" id="Q5JW98"/>
    </source>
</evidence>
<evidence type="ECO:0000255" key="2"/>
<evidence type="ECO:0000305" key="3"/>
<evidence type="ECO:0000312" key="4">
    <source>
        <dbReference type="MGI" id="MGI:2685489"/>
    </source>
</evidence>
<accession>Q8CE93</accession>
<dbReference type="EMBL" id="AK028763">
    <property type="protein sequence ID" value="BAC26107.1"/>
    <property type="status" value="ALT_INIT"/>
    <property type="molecule type" value="mRNA"/>
</dbReference>
<dbReference type="CCDS" id="CCDS35878.1"/>
<dbReference type="RefSeq" id="NP_001074634.1">
    <property type="nucleotide sequence ID" value="NM_001081165.1"/>
</dbReference>
<dbReference type="SMR" id="Q8CE93"/>
<dbReference type="FunCoup" id="Q8CE93">
    <property type="interactions" value="55"/>
</dbReference>
<dbReference type="IntAct" id="Q8CE93">
    <property type="interactions" value="1"/>
</dbReference>
<dbReference type="STRING" id="10090.ENSMUSP00000042466"/>
<dbReference type="GlyGen" id="Q8CE93">
    <property type="glycosylation" value="1 site"/>
</dbReference>
<dbReference type="iPTMnet" id="Q8CE93"/>
<dbReference type="PhosphoSitePlus" id="Q8CE93"/>
<dbReference type="PaxDb" id="10090-ENSMUSP00000042466"/>
<dbReference type="ProteomicsDB" id="281758"/>
<dbReference type="Antibodypedia" id="19425">
    <property type="antibodies" value="4 antibodies from 3 providers"/>
</dbReference>
<dbReference type="Ensembl" id="ENSMUST00000048052.7">
    <property type="protein sequence ID" value="ENSMUSP00000042466.6"/>
    <property type="gene ID" value="ENSMUSG00000039508.7"/>
</dbReference>
<dbReference type="GeneID" id="270711"/>
<dbReference type="KEGG" id="mmu:270711"/>
<dbReference type="UCSC" id="uc007eup.1">
    <property type="organism name" value="mouse"/>
</dbReference>
<dbReference type="AGR" id="MGI:2685489"/>
<dbReference type="CTD" id="221301"/>
<dbReference type="MGI" id="MGI:2685489">
    <property type="gene designation" value="Calhm4"/>
</dbReference>
<dbReference type="VEuPathDB" id="HostDB:ENSMUSG00000039508"/>
<dbReference type="eggNOG" id="ENOG502RKQ2">
    <property type="taxonomic scope" value="Eukaryota"/>
</dbReference>
<dbReference type="GeneTree" id="ENSGT01030000234610"/>
<dbReference type="HOGENOM" id="CLU_069286_3_0_1"/>
<dbReference type="InParanoid" id="Q8CE93"/>
<dbReference type="OMA" id="FRCPCQV"/>
<dbReference type="OrthoDB" id="9827748at2759"/>
<dbReference type="PhylomeDB" id="Q8CE93"/>
<dbReference type="TreeFam" id="TF329085"/>
<dbReference type="BioGRID-ORCS" id="270711">
    <property type="hits" value="1 hit in 77 CRISPR screens"/>
</dbReference>
<dbReference type="PRO" id="PR:Q8CE93"/>
<dbReference type="Proteomes" id="UP000000589">
    <property type="component" value="Chromosome 10"/>
</dbReference>
<dbReference type="RNAct" id="Q8CE93">
    <property type="molecule type" value="protein"/>
</dbReference>
<dbReference type="Bgee" id="ENSMUSG00000039508">
    <property type="expression patterns" value="Expressed in lip and 8 other cell types or tissues"/>
</dbReference>
<dbReference type="ExpressionAtlas" id="Q8CE93">
    <property type="expression patterns" value="baseline and differential"/>
</dbReference>
<dbReference type="GO" id="GO:0005886">
    <property type="term" value="C:plasma membrane"/>
    <property type="evidence" value="ECO:0007669"/>
    <property type="project" value="UniProtKB-SubCell"/>
</dbReference>
<dbReference type="GO" id="GO:1904669">
    <property type="term" value="P:ATP export"/>
    <property type="evidence" value="ECO:0007669"/>
    <property type="project" value="UniProtKB-ARBA"/>
</dbReference>
<dbReference type="GO" id="GO:0034220">
    <property type="term" value="P:monoatomic ion transmembrane transport"/>
    <property type="evidence" value="ECO:0007669"/>
    <property type="project" value="UniProtKB-KW"/>
</dbReference>
<dbReference type="InterPro" id="IPR029569">
    <property type="entry name" value="CALHM"/>
</dbReference>
<dbReference type="PANTHER" id="PTHR32261">
    <property type="entry name" value="CALCIUM HOMEOSTASIS MODULATOR PROTEIN"/>
    <property type="match status" value="1"/>
</dbReference>
<dbReference type="PANTHER" id="PTHR32261:SF5">
    <property type="entry name" value="CALCIUM HOMEOSTASIS MODULATOR PROTEIN 4"/>
    <property type="match status" value="1"/>
</dbReference>
<dbReference type="Pfam" id="PF14798">
    <property type="entry name" value="Ca_hom_mod"/>
    <property type="match status" value="1"/>
</dbReference>
<proteinExistence type="evidence at transcript level"/>
<organism>
    <name type="scientific">Mus musculus</name>
    <name type="common">Mouse</name>
    <dbReference type="NCBI Taxonomy" id="10090"/>
    <lineage>
        <taxon>Eukaryota</taxon>
        <taxon>Metazoa</taxon>
        <taxon>Chordata</taxon>
        <taxon>Craniata</taxon>
        <taxon>Vertebrata</taxon>
        <taxon>Euteleostomi</taxon>
        <taxon>Mammalia</taxon>
        <taxon>Eutheria</taxon>
        <taxon>Euarchontoglires</taxon>
        <taxon>Glires</taxon>
        <taxon>Rodentia</taxon>
        <taxon>Myomorpha</taxon>
        <taxon>Muroidea</taxon>
        <taxon>Muridae</taxon>
        <taxon>Murinae</taxon>
        <taxon>Mus</taxon>
        <taxon>Mus</taxon>
    </lineage>
</organism>
<keyword id="KW-1003">Cell membrane</keyword>
<keyword id="KW-1015">Disulfide bond</keyword>
<keyword id="KW-0407">Ion channel</keyword>
<keyword id="KW-0406">Ion transport</keyword>
<keyword id="KW-0472">Membrane</keyword>
<keyword id="KW-1185">Reference proteome</keyword>
<keyword id="KW-0812">Transmembrane</keyword>
<keyword id="KW-1133">Transmembrane helix</keyword>
<keyword id="KW-0813">Transport</keyword>
<sequence length="315" mass="35429">MSPDLNCISSSLLRSEPCINSLIAILTVCGQQLFSSYTFSCPCQVGKNFYYGSAFLVVPALILLIAGYALRGQMWTVASEYCCCSCTPPYRRSSPLERRLACLMFFDITGRALVAPLTWLTVTLLTGTYYECAASEFASVDQYPMFANVTPSKREEMLAGFPCYTSAPSDVIPIRDEVALLHRYQSQMLGWILVVLATIALLLSKCLARCCSPLTSLQHHYWTNHLHNERVLFEKAAEEHSQLLIRHRIKKVFGFVPGSEDIKHIRIPSCQDWREISVPNLLCVGDTSQGPYSFLGDRVVEENEEDRQEGIEMKP</sequence>
<feature type="chain" id="PRO_0000186725" description="Calcium homeostasis modulator protein 4">
    <location>
        <begin position="1"/>
        <end position="315"/>
    </location>
</feature>
<feature type="topological domain" description="Cytoplasmic" evidence="3">
    <location>
        <begin position="1"/>
        <end position="14"/>
    </location>
</feature>
<feature type="transmembrane region" description="Helical; Name=S1" evidence="1">
    <location>
        <begin position="15"/>
        <end position="37"/>
    </location>
</feature>
<feature type="topological domain" description="Extracellular" evidence="3">
    <location>
        <begin position="38"/>
        <end position="48"/>
    </location>
</feature>
<feature type="transmembrane region" description="Helical; Name=S2" evidence="1">
    <location>
        <begin position="49"/>
        <end position="71"/>
    </location>
</feature>
<feature type="topological domain" description="Cytoplasmic" evidence="3">
    <location>
        <begin position="72"/>
        <end position="104"/>
    </location>
</feature>
<feature type="transmembrane region" description="Helical; Name=S3" evidence="1">
    <location>
        <begin position="105"/>
        <end position="130"/>
    </location>
</feature>
<feature type="topological domain" description="Extracellular" evidence="3">
    <location>
        <begin position="131"/>
        <end position="184"/>
    </location>
</feature>
<feature type="transmembrane region" description="Helical; Name=S4" evidence="1">
    <location>
        <begin position="185"/>
        <end position="208"/>
    </location>
</feature>
<feature type="topological domain" description="Cytoplasmic" evidence="3">
    <location>
        <begin position="209"/>
        <end position="315"/>
    </location>
</feature>
<feature type="disulfide bond" evidence="1">
    <location>
        <begin position="41"/>
        <end position="132"/>
    </location>
</feature>
<feature type="disulfide bond" evidence="1">
    <location>
        <begin position="43"/>
        <end position="163"/>
    </location>
</feature>
<reference key="1">
    <citation type="journal article" date="2005" name="Science">
        <title>The transcriptional landscape of the mammalian genome.</title>
        <authorList>
            <person name="Carninci P."/>
            <person name="Kasukawa T."/>
            <person name="Katayama S."/>
            <person name="Gough J."/>
            <person name="Frith M.C."/>
            <person name="Maeda N."/>
            <person name="Oyama R."/>
            <person name="Ravasi T."/>
            <person name="Lenhard B."/>
            <person name="Wells C."/>
            <person name="Kodzius R."/>
            <person name="Shimokawa K."/>
            <person name="Bajic V.B."/>
            <person name="Brenner S.E."/>
            <person name="Batalov S."/>
            <person name="Forrest A.R."/>
            <person name="Zavolan M."/>
            <person name="Davis M.J."/>
            <person name="Wilming L.G."/>
            <person name="Aidinis V."/>
            <person name="Allen J.E."/>
            <person name="Ambesi-Impiombato A."/>
            <person name="Apweiler R."/>
            <person name="Aturaliya R.N."/>
            <person name="Bailey T.L."/>
            <person name="Bansal M."/>
            <person name="Baxter L."/>
            <person name="Beisel K.W."/>
            <person name="Bersano T."/>
            <person name="Bono H."/>
            <person name="Chalk A.M."/>
            <person name="Chiu K.P."/>
            <person name="Choudhary V."/>
            <person name="Christoffels A."/>
            <person name="Clutterbuck D.R."/>
            <person name="Crowe M.L."/>
            <person name="Dalla E."/>
            <person name="Dalrymple B.P."/>
            <person name="de Bono B."/>
            <person name="Della Gatta G."/>
            <person name="di Bernardo D."/>
            <person name="Down T."/>
            <person name="Engstrom P."/>
            <person name="Fagiolini M."/>
            <person name="Faulkner G."/>
            <person name="Fletcher C.F."/>
            <person name="Fukushima T."/>
            <person name="Furuno M."/>
            <person name="Futaki S."/>
            <person name="Gariboldi M."/>
            <person name="Georgii-Hemming P."/>
            <person name="Gingeras T.R."/>
            <person name="Gojobori T."/>
            <person name="Green R.E."/>
            <person name="Gustincich S."/>
            <person name="Harbers M."/>
            <person name="Hayashi Y."/>
            <person name="Hensch T.K."/>
            <person name="Hirokawa N."/>
            <person name="Hill D."/>
            <person name="Huminiecki L."/>
            <person name="Iacono M."/>
            <person name="Ikeo K."/>
            <person name="Iwama A."/>
            <person name="Ishikawa T."/>
            <person name="Jakt M."/>
            <person name="Kanapin A."/>
            <person name="Katoh M."/>
            <person name="Kawasawa Y."/>
            <person name="Kelso J."/>
            <person name="Kitamura H."/>
            <person name="Kitano H."/>
            <person name="Kollias G."/>
            <person name="Krishnan S.P."/>
            <person name="Kruger A."/>
            <person name="Kummerfeld S.K."/>
            <person name="Kurochkin I.V."/>
            <person name="Lareau L.F."/>
            <person name="Lazarevic D."/>
            <person name="Lipovich L."/>
            <person name="Liu J."/>
            <person name="Liuni S."/>
            <person name="McWilliam S."/>
            <person name="Madan Babu M."/>
            <person name="Madera M."/>
            <person name="Marchionni L."/>
            <person name="Matsuda H."/>
            <person name="Matsuzawa S."/>
            <person name="Miki H."/>
            <person name="Mignone F."/>
            <person name="Miyake S."/>
            <person name="Morris K."/>
            <person name="Mottagui-Tabar S."/>
            <person name="Mulder N."/>
            <person name="Nakano N."/>
            <person name="Nakauchi H."/>
            <person name="Ng P."/>
            <person name="Nilsson R."/>
            <person name="Nishiguchi S."/>
            <person name="Nishikawa S."/>
            <person name="Nori F."/>
            <person name="Ohara O."/>
            <person name="Okazaki Y."/>
            <person name="Orlando V."/>
            <person name="Pang K.C."/>
            <person name="Pavan W.J."/>
            <person name="Pavesi G."/>
            <person name="Pesole G."/>
            <person name="Petrovsky N."/>
            <person name="Piazza S."/>
            <person name="Reed J."/>
            <person name="Reid J.F."/>
            <person name="Ring B.Z."/>
            <person name="Ringwald M."/>
            <person name="Rost B."/>
            <person name="Ruan Y."/>
            <person name="Salzberg S.L."/>
            <person name="Sandelin A."/>
            <person name="Schneider C."/>
            <person name="Schoenbach C."/>
            <person name="Sekiguchi K."/>
            <person name="Semple C.A."/>
            <person name="Seno S."/>
            <person name="Sessa L."/>
            <person name="Sheng Y."/>
            <person name="Shibata Y."/>
            <person name="Shimada H."/>
            <person name="Shimada K."/>
            <person name="Silva D."/>
            <person name="Sinclair B."/>
            <person name="Sperling S."/>
            <person name="Stupka E."/>
            <person name="Sugiura K."/>
            <person name="Sultana R."/>
            <person name="Takenaka Y."/>
            <person name="Taki K."/>
            <person name="Tammoja K."/>
            <person name="Tan S.L."/>
            <person name="Tang S."/>
            <person name="Taylor M.S."/>
            <person name="Tegner J."/>
            <person name="Teichmann S.A."/>
            <person name="Ueda H.R."/>
            <person name="van Nimwegen E."/>
            <person name="Verardo R."/>
            <person name="Wei C.L."/>
            <person name="Yagi K."/>
            <person name="Yamanishi H."/>
            <person name="Zabarovsky E."/>
            <person name="Zhu S."/>
            <person name="Zimmer A."/>
            <person name="Hide W."/>
            <person name="Bult C."/>
            <person name="Grimmond S.M."/>
            <person name="Teasdale R.D."/>
            <person name="Liu E.T."/>
            <person name="Brusic V."/>
            <person name="Quackenbush J."/>
            <person name="Wahlestedt C."/>
            <person name="Mattick J.S."/>
            <person name="Hume D.A."/>
            <person name="Kai C."/>
            <person name="Sasaki D."/>
            <person name="Tomaru Y."/>
            <person name="Fukuda S."/>
            <person name="Kanamori-Katayama M."/>
            <person name="Suzuki M."/>
            <person name="Aoki J."/>
            <person name="Arakawa T."/>
            <person name="Iida J."/>
            <person name="Imamura K."/>
            <person name="Itoh M."/>
            <person name="Kato T."/>
            <person name="Kawaji H."/>
            <person name="Kawagashira N."/>
            <person name="Kawashima T."/>
            <person name="Kojima M."/>
            <person name="Kondo S."/>
            <person name="Konno H."/>
            <person name="Nakano K."/>
            <person name="Ninomiya N."/>
            <person name="Nishio T."/>
            <person name="Okada M."/>
            <person name="Plessy C."/>
            <person name="Shibata K."/>
            <person name="Shiraki T."/>
            <person name="Suzuki S."/>
            <person name="Tagami M."/>
            <person name="Waki K."/>
            <person name="Watahiki A."/>
            <person name="Okamura-Oho Y."/>
            <person name="Suzuki H."/>
            <person name="Kawai J."/>
            <person name="Hayashizaki Y."/>
        </authorList>
    </citation>
    <scope>NUCLEOTIDE SEQUENCE [LARGE SCALE MRNA]</scope>
    <source>
        <strain>C57BL/6J</strain>
        <tissue>Skin</tissue>
    </source>
</reference>
<comment type="function">
    <text evidence="1">May assemble to form gap junction channel-like structures involved in intercellular communication. Channel gating and ion conductance are likely regulated by membrane lipids rather than by membrane depolarization or extracellular calcium levels.</text>
</comment>
<comment type="subunit">
    <text evidence="1">Oligomerizes to form decameric and undecameric channels. Two hemichannels can assemble in a tail-to-tail manner to form a gap junction.</text>
</comment>
<comment type="subcellular location">
    <subcellularLocation>
        <location evidence="1">Cell membrane</location>
        <topology evidence="2">Multi-pass membrane protein</topology>
    </subcellularLocation>
</comment>
<comment type="similarity">
    <text evidence="3">Belongs to the CALHM family.</text>
</comment>
<comment type="sequence caution" evidence="3">
    <conflict type="erroneous initiation">
        <sequence resource="EMBL-CDS" id="BAC26107"/>
    </conflict>
</comment>
<name>CAHM4_MOUSE</name>
<protein>
    <recommendedName>
        <fullName>Calcium homeostasis modulator protein 4</fullName>
    </recommendedName>
    <alternativeName>
        <fullName>Protein FAM26D</fullName>
    </alternativeName>
</protein>
<gene>
    <name evidence="4" type="primary">Calhm4</name>
    <name type="synonym">Fam26d</name>
</gene>